<feature type="transit peptide" description="Mitochondrion" evidence="2">
    <location>
        <begin position="1"/>
        <end position="20"/>
    </location>
</feature>
<feature type="chain" id="PRO_0000399561" description="Altered inheritance of mitochondria protein 46, mitochondrial">
    <location>
        <begin position="21"/>
        <end position="310"/>
    </location>
</feature>
<protein>
    <recommendedName>
        <fullName>Altered inheritance of mitochondria protein 46, mitochondrial</fullName>
    </recommendedName>
</protein>
<sequence length="310" mass="34113">MRLISKVLVKTNCLEVGMRRAPQWYSHYSTTAGNARVNKKGSKVVPVLTGLALASIFAKKWYDDSQIKKADATSVAVDASISAFPKKMGPPQWPFSTQYELIGKGVRCVSSITFKAYGLGIYVAAEDKHLVSEVLDSKFLSQAFIDTAAPPSPENSHQDNLRAALNDPAKAPILINNLLDSGIRLMSKNTPIKAGSFKLLMDGTKKSVLKNPDSQSQDKDRLEAGFQELHDCFRSVKGLVARDDDFFIELNKDCSMNLSYYARKKDEFVILGTVKEPLIGKLLFAHYLAAVDPPSPEARKEVIDALVSLS</sequence>
<organism>
    <name type="scientific">Saccharomyces cerevisiae (strain RM11-1a)</name>
    <name type="common">Baker's yeast</name>
    <dbReference type="NCBI Taxonomy" id="285006"/>
    <lineage>
        <taxon>Eukaryota</taxon>
        <taxon>Fungi</taxon>
        <taxon>Dikarya</taxon>
        <taxon>Ascomycota</taxon>
        <taxon>Saccharomycotina</taxon>
        <taxon>Saccharomycetes</taxon>
        <taxon>Saccharomycetales</taxon>
        <taxon>Saccharomycetaceae</taxon>
        <taxon>Saccharomyces</taxon>
    </lineage>
</organism>
<accession>B3LSV9</accession>
<dbReference type="EMBL" id="CH408053">
    <property type="protein sequence ID" value="EDV09240.1"/>
    <property type="molecule type" value="Genomic_DNA"/>
</dbReference>
<dbReference type="SMR" id="B3LSV9"/>
<dbReference type="HOGENOM" id="CLU_038840_0_1_1"/>
<dbReference type="OrthoDB" id="11535at4893"/>
<dbReference type="Proteomes" id="UP000008335">
    <property type="component" value="Unassembled WGS sequence"/>
</dbReference>
<dbReference type="GO" id="GO:0005739">
    <property type="term" value="C:mitochondrion"/>
    <property type="evidence" value="ECO:0007669"/>
    <property type="project" value="UniProtKB-SubCell"/>
</dbReference>
<dbReference type="GO" id="GO:0016872">
    <property type="term" value="F:intramolecular lyase activity"/>
    <property type="evidence" value="ECO:0007669"/>
    <property type="project" value="InterPro"/>
</dbReference>
<dbReference type="Gene3D" id="3.50.70.10">
    <property type="match status" value="1"/>
</dbReference>
<dbReference type="InterPro" id="IPR016087">
    <property type="entry name" value="Chalcone_isomerase"/>
</dbReference>
<dbReference type="InterPro" id="IPR016088">
    <property type="entry name" value="Chalcone_isomerase_3-sand"/>
</dbReference>
<dbReference type="InterPro" id="IPR036298">
    <property type="entry name" value="Chalcone_isomerase_sf"/>
</dbReference>
<dbReference type="Pfam" id="PF16035">
    <property type="entry name" value="Chalcone_2"/>
    <property type="match status" value="1"/>
</dbReference>
<dbReference type="SUPFAM" id="SSF54626">
    <property type="entry name" value="Chalcone isomerase"/>
    <property type="match status" value="1"/>
</dbReference>
<keyword id="KW-0496">Mitochondrion</keyword>
<keyword id="KW-0809">Transit peptide</keyword>
<comment type="subcellular location">
    <subcellularLocation>
        <location evidence="1">Mitochondrion</location>
    </subcellularLocation>
</comment>
<comment type="similarity">
    <text evidence="3">Belongs to the AIM18/AIM46 family.</text>
</comment>
<evidence type="ECO:0000250" key="1"/>
<evidence type="ECO:0000255" key="2"/>
<evidence type="ECO:0000305" key="3"/>
<name>AIM46_YEAS1</name>
<gene>
    <name type="primary">AIM46</name>
    <name type="synonym">FMP34</name>
    <name type="ORF">SCRG_04911</name>
</gene>
<proteinExistence type="inferred from homology"/>
<reference key="1">
    <citation type="submission" date="2005-03" db="EMBL/GenBank/DDBJ databases">
        <title>Annotation of the Saccharomyces cerevisiae RM11-1a genome.</title>
        <authorList>
            <consortium name="The Broad Institute Genome Sequencing Platform"/>
            <person name="Birren B.W."/>
            <person name="Lander E.S."/>
            <person name="Galagan J.E."/>
            <person name="Nusbaum C."/>
            <person name="Devon K."/>
            <person name="Cuomo C."/>
            <person name="Jaffe D.B."/>
            <person name="Butler J."/>
            <person name="Alvarez P."/>
            <person name="Gnerre S."/>
            <person name="Grabherr M."/>
            <person name="Kleber M."/>
            <person name="Mauceli E.W."/>
            <person name="Brockman W."/>
            <person name="MacCallum I.A."/>
            <person name="Rounsley S."/>
            <person name="Young S.K."/>
            <person name="LaButti K."/>
            <person name="Pushparaj V."/>
            <person name="DeCaprio D."/>
            <person name="Crawford M."/>
            <person name="Koehrsen M."/>
            <person name="Engels R."/>
            <person name="Montgomery P."/>
            <person name="Pearson M."/>
            <person name="Howarth C."/>
            <person name="Larson L."/>
            <person name="Luoma S."/>
            <person name="White J."/>
            <person name="O'Leary S."/>
            <person name="Kodira C.D."/>
            <person name="Zeng Q."/>
            <person name="Yandava C."/>
            <person name="Alvarado L."/>
            <person name="Pratt S."/>
            <person name="Kruglyak L."/>
        </authorList>
    </citation>
    <scope>NUCLEOTIDE SEQUENCE [LARGE SCALE GENOMIC DNA]</scope>
    <source>
        <strain>RM11-1a</strain>
    </source>
</reference>